<evidence type="ECO:0000255" key="1">
    <source>
        <dbReference type="HAMAP-Rule" id="MF_01306"/>
    </source>
</evidence>
<evidence type="ECO:0000305" key="2"/>
<gene>
    <name evidence="1" type="primary">rpsD</name>
    <name type="ordered locus">cauri_0444</name>
</gene>
<sequence>MARYTGPATRVSRRLRVDLVGGDMAFERRPYPPGQAGRNRIKESEYLLQLQEKQKAKYTYGVLERQFRRYYAEANRLPGKTGDNLVVLLESRLDNVIYRAGLANTRRQARQLVSHGHFTVNGKKINVPSFRVTQYDIIDVRERSQKMEWFEEAQDRLVDANVPAWLQVVPDTLRILVHQLPERAQIDVPLQEQLIVELYSK</sequence>
<keyword id="KW-1185">Reference proteome</keyword>
<keyword id="KW-0687">Ribonucleoprotein</keyword>
<keyword id="KW-0689">Ribosomal protein</keyword>
<keyword id="KW-0694">RNA-binding</keyword>
<keyword id="KW-0699">rRNA-binding</keyword>
<feature type="chain" id="PRO_1000165395" description="Small ribosomal subunit protein uS4">
    <location>
        <begin position="1"/>
        <end position="201"/>
    </location>
</feature>
<feature type="domain" description="S4 RNA-binding" evidence="1">
    <location>
        <begin position="91"/>
        <end position="154"/>
    </location>
</feature>
<protein>
    <recommendedName>
        <fullName evidence="1">Small ribosomal subunit protein uS4</fullName>
    </recommendedName>
    <alternativeName>
        <fullName evidence="2">30S ribosomal protein S4</fullName>
    </alternativeName>
</protein>
<proteinExistence type="inferred from homology"/>
<comment type="function">
    <text evidence="1">One of the primary rRNA binding proteins, it binds directly to 16S rRNA where it nucleates assembly of the body of the 30S subunit.</text>
</comment>
<comment type="function">
    <text evidence="1">With S5 and S12 plays an important role in translational accuracy.</text>
</comment>
<comment type="subunit">
    <text evidence="1">Part of the 30S ribosomal subunit. Contacts protein S5. The interaction surface between S4 and S5 is involved in control of translational fidelity.</text>
</comment>
<comment type="similarity">
    <text evidence="1">Belongs to the universal ribosomal protein uS4 family.</text>
</comment>
<accession>C3PL37</accession>
<organism>
    <name type="scientific">Corynebacterium aurimucosum (strain ATCC 700975 / DSM 44827 / CIP 107346 / CN-1)</name>
    <name type="common">Corynebacterium nigricans</name>
    <dbReference type="NCBI Taxonomy" id="548476"/>
    <lineage>
        <taxon>Bacteria</taxon>
        <taxon>Bacillati</taxon>
        <taxon>Actinomycetota</taxon>
        <taxon>Actinomycetes</taxon>
        <taxon>Mycobacteriales</taxon>
        <taxon>Corynebacteriaceae</taxon>
        <taxon>Corynebacterium</taxon>
    </lineage>
</organism>
<dbReference type="EMBL" id="CP001601">
    <property type="protein sequence ID" value="ACP32041.1"/>
    <property type="molecule type" value="Genomic_DNA"/>
</dbReference>
<dbReference type="RefSeq" id="WP_010189536.1">
    <property type="nucleotide sequence ID" value="NZ_ACLH01000063.1"/>
</dbReference>
<dbReference type="SMR" id="C3PL37"/>
<dbReference type="STRING" id="548476.cauri_0444"/>
<dbReference type="GeneID" id="31923060"/>
<dbReference type="KEGG" id="car:cauri_0444"/>
<dbReference type="eggNOG" id="COG0522">
    <property type="taxonomic scope" value="Bacteria"/>
</dbReference>
<dbReference type="HOGENOM" id="CLU_092403_0_2_11"/>
<dbReference type="OrthoDB" id="9803672at2"/>
<dbReference type="Proteomes" id="UP000002077">
    <property type="component" value="Chromosome"/>
</dbReference>
<dbReference type="GO" id="GO:0015935">
    <property type="term" value="C:small ribosomal subunit"/>
    <property type="evidence" value="ECO:0007669"/>
    <property type="project" value="InterPro"/>
</dbReference>
<dbReference type="GO" id="GO:0019843">
    <property type="term" value="F:rRNA binding"/>
    <property type="evidence" value="ECO:0007669"/>
    <property type="project" value="UniProtKB-UniRule"/>
</dbReference>
<dbReference type="GO" id="GO:0003735">
    <property type="term" value="F:structural constituent of ribosome"/>
    <property type="evidence" value="ECO:0007669"/>
    <property type="project" value="InterPro"/>
</dbReference>
<dbReference type="GO" id="GO:0042274">
    <property type="term" value="P:ribosomal small subunit biogenesis"/>
    <property type="evidence" value="ECO:0007669"/>
    <property type="project" value="TreeGrafter"/>
</dbReference>
<dbReference type="GO" id="GO:0006412">
    <property type="term" value="P:translation"/>
    <property type="evidence" value="ECO:0007669"/>
    <property type="project" value="UniProtKB-UniRule"/>
</dbReference>
<dbReference type="CDD" id="cd00165">
    <property type="entry name" value="S4"/>
    <property type="match status" value="1"/>
</dbReference>
<dbReference type="FunFam" id="3.10.290.10:FF:000001">
    <property type="entry name" value="30S ribosomal protein S4"/>
    <property type="match status" value="1"/>
</dbReference>
<dbReference type="Gene3D" id="1.10.1050.10">
    <property type="entry name" value="Ribosomal Protein S4 Delta 41, Chain A, domain 1"/>
    <property type="match status" value="1"/>
</dbReference>
<dbReference type="Gene3D" id="3.10.290.10">
    <property type="entry name" value="RNA-binding S4 domain"/>
    <property type="match status" value="1"/>
</dbReference>
<dbReference type="HAMAP" id="MF_01306_B">
    <property type="entry name" value="Ribosomal_uS4_B"/>
    <property type="match status" value="1"/>
</dbReference>
<dbReference type="InterPro" id="IPR022801">
    <property type="entry name" value="Ribosomal_uS4"/>
</dbReference>
<dbReference type="InterPro" id="IPR005709">
    <property type="entry name" value="Ribosomal_uS4_bac-type"/>
</dbReference>
<dbReference type="InterPro" id="IPR018079">
    <property type="entry name" value="Ribosomal_uS4_CS"/>
</dbReference>
<dbReference type="InterPro" id="IPR001912">
    <property type="entry name" value="Ribosomal_uS4_N"/>
</dbReference>
<dbReference type="InterPro" id="IPR002942">
    <property type="entry name" value="S4_RNA-bd"/>
</dbReference>
<dbReference type="InterPro" id="IPR036986">
    <property type="entry name" value="S4_RNA-bd_sf"/>
</dbReference>
<dbReference type="NCBIfam" id="NF003717">
    <property type="entry name" value="PRK05327.1"/>
    <property type="match status" value="1"/>
</dbReference>
<dbReference type="NCBIfam" id="TIGR01017">
    <property type="entry name" value="rpsD_bact"/>
    <property type="match status" value="1"/>
</dbReference>
<dbReference type="PANTHER" id="PTHR11831">
    <property type="entry name" value="30S 40S RIBOSOMAL PROTEIN"/>
    <property type="match status" value="1"/>
</dbReference>
<dbReference type="PANTHER" id="PTHR11831:SF4">
    <property type="entry name" value="SMALL RIBOSOMAL SUBUNIT PROTEIN US4M"/>
    <property type="match status" value="1"/>
</dbReference>
<dbReference type="Pfam" id="PF00163">
    <property type="entry name" value="Ribosomal_S4"/>
    <property type="match status" value="1"/>
</dbReference>
<dbReference type="Pfam" id="PF01479">
    <property type="entry name" value="S4"/>
    <property type="match status" value="1"/>
</dbReference>
<dbReference type="SMART" id="SM01390">
    <property type="entry name" value="Ribosomal_S4"/>
    <property type="match status" value="1"/>
</dbReference>
<dbReference type="SMART" id="SM00363">
    <property type="entry name" value="S4"/>
    <property type="match status" value="1"/>
</dbReference>
<dbReference type="SUPFAM" id="SSF55174">
    <property type="entry name" value="Alpha-L RNA-binding motif"/>
    <property type="match status" value="1"/>
</dbReference>
<dbReference type="PROSITE" id="PS00632">
    <property type="entry name" value="RIBOSOMAL_S4"/>
    <property type="match status" value="1"/>
</dbReference>
<dbReference type="PROSITE" id="PS50889">
    <property type="entry name" value="S4"/>
    <property type="match status" value="1"/>
</dbReference>
<name>RS4_CORA7</name>
<reference key="1">
    <citation type="journal article" date="2010" name="BMC Genomics">
        <title>Complete genome sequence and lifestyle of black-pigmented Corynebacterium aurimucosum ATCC 700975 (formerly C. nigricans CN-1) isolated from a vaginal swab of a woman with spontaneous abortion.</title>
        <authorList>
            <person name="Trost E."/>
            <person name="Gotker S."/>
            <person name="Schneider J."/>
            <person name="Schneiker-Bekel S."/>
            <person name="Szczepanowski R."/>
            <person name="Tilker A."/>
            <person name="Viehoever P."/>
            <person name="Arnold W."/>
            <person name="Bekel T."/>
            <person name="Blom J."/>
            <person name="Gartemann K.H."/>
            <person name="Linke B."/>
            <person name="Goesmann A."/>
            <person name="Puhler A."/>
            <person name="Shukla S.K."/>
            <person name="Tauch A."/>
        </authorList>
    </citation>
    <scope>NUCLEOTIDE SEQUENCE [LARGE SCALE GENOMIC DNA]</scope>
    <source>
        <strain>ATCC 700975 / DSM 44827 / CIP 107346 / CN-1</strain>
    </source>
</reference>